<accession>B4TDK4</accession>
<proteinExistence type="inferred from homology"/>
<organism>
    <name type="scientific">Salmonella heidelberg (strain SL476)</name>
    <dbReference type="NCBI Taxonomy" id="454169"/>
    <lineage>
        <taxon>Bacteria</taxon>
        <taxon>Pseudomonadati</taxon>
        <taxon>Pseudomonadota</taxon>
        <taxon>Gammaproteobacteria</taxon>
        <taxon>Enterobacterales</taxon>
        <taxon>Enterobacteriaceae</taxon>
        <taxon>Salmonella</taxon>
    </lineage>
</organism>
<sequence>MKNINPTQTSAWQALQKHYDEMKDVTIAELFANDSDRFAKFSATFDDLMLVDFSKNRITEETLAKLQDLAKETDLAGAIKSMFSGEKINRTEDRAVLHVALRNRSNTPIIVDGKDVMPEVNAVLEKMKTFSQAIISGQWKGYTGKAITDVVNIGIGGSDLGPFMVTEALRPYKNHLTMHFVSNVDGTHIAEVLKKVNPETTLFLVASKTFTTQETMTNAHSARDWFLKTAGDEKHVAKHFAALSTNAKAVGEFGIDTANMFEFWDWVGGRYSLWSAIGLSIILSVGFDNFVELLSGAHAMDKHFSTTPAEKNLPILLALIGIWYNNFFGAETEAILPYDQYMHRFAAYFQQGNMESNGKYVDRNGNAVDYQTGPIIWGEPGTNGQHAFYQLIHQGTKMVPCDFIAPAITHNPLSDHHQKLLSNFFAQTEALAFGKSREVVEQEYRDQGKDPAQLEHVVPFKVFEGNRPTNSILLREITPFSLGALIALYEHKIFTQGVILNIFTFDQWGVELGKQLANRILPELGDDKAISSHDSSTNGLINRYKAWRA</sequence>
<gene>
    <name evidence="1" type="primary">pgi</name>
    <name type="ordered locus">SeHA_C4563</name>
</gene>
<keyword id="KW-0963">Cytoplasm</keyword>
<keyword id="KW-0312">Gluconeogenesis</keyword>
<keyword id="KW-0324">Glycolysis</keyword>
<keyword id="KW-0413">Isomerase</keyword>
<name>G6PI_SALHS</name>
<dbReference type="EC" id="5.3.1.9" evidence="1"/>
<dbReference type="EMBL" id="CP001120">
    <property type="protein sequence ID" value="ACF66701.1"/>
    <property type="molecule type" value="Genomic_DNA"/>
</dbReference>
<dbReference type="RefSeq" id="WP_000790037.1">
    <property type="nucleotide sequence ID" value="NC_011083.1"/>
</dbReference>
<dbReference type="SMR" id="B4TDK4"/>
<dbReference type="KEGG" id="seh:SeHA_C4563"/>
<dbReference type="HOGENOM" id="CLU_017947_3_1_6"/>
<dbReference type="UniPathway" id="UPA00109">
    <property type="reaction ID" value="UER00181"/>
</dbReference>
<dbReference type="UniPathway" id="UPA00138"/>
<dbReference type="Proteomes" id="UP000001866">
    <property type="component" value="Chromosome"/>
</dbReference>
<dbReference type="GO" id="GO:0005829">
    <property type="term" value="C:cytosol"/>
    <property type="evidence" value="ECO:0007669"/>
    <property type="project" value="TreeGrafter"/>
</dbReference>
<dbReference type="GO" id="GO:0097367">
    <property type="term" value="F:carbohydrate derivative binding"/>
    <property type="evidence" value="ECO:0007669"/>
    <property type="project" value="InterPro"/>
</dbReference>
<dbReference type="GO" id="GO:0004347">
    <property type="term" value="F:glucose-6-phosphate isomerase activity"/>
    <property type="evidence" value="ECO:0007669"/>
    <property type="project" value="UniProtKB-UniRule"/>
</dbReference>
<dbReference type="GO" id="GO:0048029">
    <property type="term" value="F:monosaccharide binding"/>
    <property type="evidence" value="ECO:0007669"/>
    <property type="project" value="TreeGrafter"/>
</dbReference>
<dbReference type="GO" id="GO:0006094">
    <property type="term" value="P:gluconeogenesis"/>
    <property type="evidence" value="ECO:0007669"/>
    <property type="project" value="UniProtKB-UniRule"/>
</dbReference>
<dbReference type="GO" id="GO:0051156">
    <property type="term" value="P:glucose 6-phosphate metabolic process"/>
    <property type="evidence" value="ECO:0007669"/>
    <property type="project" value="TreeGrafter"/>
</dbReference>
<dbReference type="GO" id="GO:0006096">
    <property type="term" value="P:glycolytic process"/>
    <property type="evidence" value="ECO:0007669"/>
    <property type="project" value="UniProtKB-UniRule"/>
</dbReference>
<dbReference type="CDD" id="cd05015">
    <property type="entry name" value="SIS_PGI_1"/>
    <property type="match status" value="1"/>
</dbReference>
<dbReference type="CDD" id="cd05016">
    <property type="entry name" value="SIS_PGI_2"/>
    <property type="match status" value="1"/>
</dbReference>
<dbReference type="FunFam" id="1.10.1390.10:FF:000001">
    <property type="entry name" value="Glucose-6-phosphate isomerase"/>
    <property type="match status" value="1"/>
</dbReference>
<dbReference type="FunFam" id="3.40.50.10490:FF:000004">
    <property type="entry name" value="Glucose-6-phosphate isomerase"/>
    <property type="match status" value="1"/>
</dbReference>
<dbReference type="Gene3D" id="1.10.1390.10">
    <property type="match status" value="1"/>
</dbReference>
<dbReference type="Gene3D" id="3.40.50.10490">
    <property type="entry name" value="Glucose-6-phosphate isomerase like protein, domain 1"/>
    <property type="match status" value="2"/>
</dbReference>
<dbReference type="HAMAP" id="MF_00473">
    <property type="entry name" value="G6P_isomerase"/>
    <property type="match status" value="1"/>
</dbReference>
<dbReference type="InterPro" id="IPR001672">
    <property type="entry name" value="G6P_Isomerase"/>
</dbReference>
<dbReference type="InterPro" id="IPR023096">
    <property type="entry name" value="G6P_Isomerase_C"/>
</dbReference>
<dbReference type="InterPro" id="IPR018189">
    <property type="entry name" value="Phosphoglucose_isomerase_CS"/>
</dbReference>
<dbReference type="InterPro" id="IPR046348">
    <property type="entry name" value="SIS_dom_sf"/>
</dbReference>
<dbReference type="InterPro" id="IPR035476">
    <property type="entry name" value="SIS_PGI_1"/>
</dbReference>
<dbReference type="InterPro" id="IPR035482">
    <property type="entry name" value="SIS_PGI_2"/>
</dbReference>
<dbReference type="NCBIfam" id="NF001211">
    <property type="entry name" value="PRK00179.1"/>
    <property type="match status" value="1"/>
</dbReference>
<dbReference type="PANTHER" id="PTHR11469">
    <property type="entry name" value="GLUCOSE-6-PHOSPHATE ISOMERASE"/>
    <property type="match status" value="1"/>
</dbReference>
<dbReference type="PANTHER" id="PTHR11469:SF1">
    <property type="entry name" value="GLUCOSE-6-PHOSPHATE ISOMERASE"/>
    <property type="match status" value="1"/>
</dbReference>
<dbReference type="Pfam" id="PF00342">
    <property type="entry name" value="PGI"/>
    <property type="match status" value="1"/>
</dbReference>
<dbReference type="PRINTS" id="PR00662">
    <property type="entry name" value="G6PISOMERASE"/>
</dbReference>
<dbReference type="SUPFAM" id="SSF53697">
    <property type="entry name" value="SIS domain"/>
    <property type="match status" value="1"/>
</dbReference>
<dbReference type="PROSITE" id="PS00765">
    <property type="entry name" value="P_GLUCOSE_ISOMERASE_1"/>
    <property type="match status" value="1"/>
</dbReference>
<dbReference type="PROSITE" id="PS00174">
    <property type="entry name" value="P_GLUCOSE_ISOMERASE_2"/>
    <property type="match status" value="1"/>
</dbReference>
<dbReference type="PROSITE" id="PS51463">
    <property type="entry name" value="P_GLUCOSE_ISOMERASE_3"/>
    <property type="match status" value="1"/>
</dbReference>
<reference key="1">
    <citation type="journal article" date="2011" name="J. Bacteriol.">
        <title>Comparative genomics of 28 Salmonella enterica isolates: evidence for CRISPR-mediated adaptive sublineage evolution.</title>
        <authorList>
            <person name="Fricke W.F."/>
            <person name="Mammel M.K."/>
            <person name="McDermott P.F."/>
            <person name="Tartera C."/>
            <person name="White D.G."/>
            <person name="Leclerc J.E."/>
            <person name="Ravel J."/>
            <person name="Cebula T.A."/>
        </authorList>
    </citation>
    <scope>NUCLEOTIDE SEQUENCE [LARGE SCALE GENOMIC DNA]</scope>
    <source>
        <strain>SL476</strain>
    </source>
</reference>
<comment type="function">
    <text evidence="1">Catalyzes the reversible isomerization of glucose-6-phosphate to fructose-6-phosphate.</text>
</comment>
<comment type="catalytic activity">
    <reaction evidence="1">
        <text>alpha-D-glucose 6-phosphate = beta-D-fructose 6-phosphate</text>
        <dbReference type="Rhea" id="RHEA:11816"/>
        <dbReference type="ChEBI" id="CHEBI:57634"/>
        <dbReference type="ChEBI" id="CHEBI:58225"/>
        <dbReference type="EC" id="5.3.1.9"/>
    </reaction>
</comment>
<comment type="pathway">
    <text evidence="1">Carbohydrate biosynthesis; gluconeogenesis.</text>
</comment>
<comment type="pathway">
    <text evidence="1">Carbohydrate degradation; glycolysis; D-glyceraldehyde 3-phosphate and glycerone phosphate from D-glucose: step 2/4.</text>
</comment>
<comment type="subcellular location">
    <subcellularLocation>
        <location evidence="1">Cytoplasm</location>
    </subcellularLocation>
</comment>
<comment type="similarity">
    <text evidence="1">Belongs to the GPI family.</text>
</comment>
<protein>
    <recommendedName>
        <fullName evidence="1">Glucose-6-phosphate isomerase</fullName>
        <shortName evidence="1">GPI</shortName>
        <ecNumber evidence="1">5.3.1.9</ecNumber>
    </recommendedName>
    <alternativeName>
        <fullName evidence="1">Phosphoglucose isomerase</fullName>
        <shortName evidence="1">PGI</shortName>
    </alternativeName>
    <alternativeName>
        <fullName evidence="1">Phosphohexose isomerase</fullName>
        <shortName evidence="1">PHI</shortName>
    </alternativeName>
</protein>
<evidence type="ECO:0000255" key="1">
    <source>
        <dbReference type="HAMAP-Rule" id="MF_00473"/>
    </source>
</evidence>
<feature type="chain" id="PRO_1000125754" description="Glucose-6-phosphate isomerase">
    <location>
        <begin position="1"/>
        <end position="549"/>
    </location>
</feature>
<feature type="active site" description="Proton donor" evidence="1">
    <location>
        <position position="355"/>
    </location>
</feature>
<feature type="active site" evidence="1">
    <location>
        <position position="386"/>
    </location>
</feature>
<feature type="active site" evidence="1">
    <location>
        <position position="514"/>
    </location>
</feature>